<organism>
    <name type="scientific">Salmonella paratyphi A (strain AKU_12601)</name>
    <dbReference type="NCBI Taxonomy" id="554290"/>
    <lineage>
        <taxon>Bacteria</taxon>
        <taxon>Pseudomonadati</taxon>
        <taxon>Pseudomonadota</taxon>
        <taxon>Gammaproteobacteria</taxon>
        <taxon>Enterobacterales</taxon>
        <taxon>Enterobacteriaceae</taxon>
        <taxon>Salmonella</taxon>
    </lineage>
</organism>
<sequence>MELIFLGTSAGVPTRSRNVTAILLHLQHPTQPGVWLFDCGEGTQHQMLNTAFHPGKLERIFISHLHGDHLFGLPGLLCSRSMAGNPHPLTVYGPQGVREFIATTLRLSGSWTDFPLQIEEISAGDILDDGLRKVTAFRLEHPLECYGYRVVEHDKPGALNARALKAAGVTPGPLFQALKAGKTVTLADGRQINGADYLAPAVAGKSVAIFGDTAPCEAALALAQGVDVMVHETTLDASMEEKANARGHSSTRQTATLAREAAVGRLIMTHISSRYDDKGCQRLLAECRAIFPATELAYDFSVFPV</sequence>
<keyword id="KW-0255">Endonuclease</keyword>
<keyword id="KW-0269">Exonuclease</keyword>
<keyword id="KW-0378">Hydrolase</keyword>
<keyword id="KW-0479">Metal-binding</keyword>
<keyword id="KW-0540">Nuclease</keyword>
<keyword id="KW-0819">tRNA processing</keyword>
<keyword id="KW-0862">Zinc</keyword>
<evidence type="ECO:0000255" key="1">
    <source>
        <dbReference type="HAMAP-Rule" id="MF_01818"/>
    </source>
</evidence>
<gene>
    <name evidence="1" type="primary">rbn</name>
    <name type="synonym">rnz</name>
    <name type="ordered locus">SSPA0514</name>
</gene>
<reference key="1">
    <citation type="journal article" date="2009" name="BMC Genomics">
        <title>Pseudogene accumulation in the evolutionary histories of Salmonella enterica serovars Paratyphi A and Typhi.</title>
        <authorList>
            <person name="Holt K.E."/>
            <person name="Thomson N.R."/>
            <person name="Wain J."/>
            <person name="Langridge G.C."/>
            <person name="Hasan R."/>
            <person name="Bhutta Z.A."/>
            <person name="Quail M.A."/>
            <person name="Norbertczak H."/>
            <person name="Walker D."/>
            <person name="Simmonds M."/>
            <person name="White B."/>
            <person name="Bason N."/>
            <person name="Mungall K."/>
            <person name="Dougan G."/>
            <person name="Parkhill J."/>
        </authorList>
    </citation>
    <scope>NUCLEOTIDE SEQUENCE [LARGE SCALE GENOMIC DNA]</scope>
    <source>
        <strain>AKU_12601</strain>
    </source>
</reference>
<comment type="function">
    <text evidence="1">Zinc phosphodiesterase, which has both exoribonuclease and endoribonuclease activities.</text>
</comment>
<comment type="cofactor">
    <cofactor evidence="1">
        <name>Zn(2+)</name>
        <dbReference type="ChEBI" id="CHEBI:29105"/>
    </cofactor>
    <text evidence="1">Binds 2 Zn(2+) ions.</text>
</comment>
<comment type="subunit">
    <text evidence="1">Homodimer.</text>
</comment>
<comment type="similarity">
    <text evidence="1">Belongs to the RNase Z family. RNase BN subfamily.</text>
</comment>
<protein>
    <recommendedName>
        <fullName evidence="1">Ribonuclease BN</fullName>
        <shortName evidence="1">RNase BN</shortName>
        <ecNumber evidence="1">3.1.-.-</ecNumber>
    </recommendedName>
    <alternativeName>
        <fullName evidence="1">Ribonuclease Z homolog</fullName>
        <shortName evidence="1">RNase Z homolog</shortName>
    </alternativeName>
</protein>
<accession>B5BCN2</accession>
<proteinExistence type="inferred from homology"/>
<dbReference type="EC" id="3.1.-.-" evidence="1"/>
<dbReference type="EMBL" id="FM200053">
    <property type="protein sequence ID" value="CAR58643.1"/>
    <property type="molecule type" value="Genomic_DNA"/>
</dbReference>
<dbReference type="RefSeq" id="WP_000419093.1">
    <property type="nucleotide sequence ID" value="NC_011147.1"/>
</dbReference>
<dbReference type="SMR" id="B5BCN2"/>
<dbReference type="KEGG" id="sek:SSPA0514"/>
<dbReference type="HOGENOM" id="CLU_031317_2_0_6"/>
<dbReference type="Proteomes" id="UP000001869">
    <property type="component" value="Chromosome"/>
</dbReference>
<dbReference type="GO" id="GO:0042781">
    <property type="term" value="F:3'-tRNA processing endoribonuclease activity"/>
    <property type="evidence" value="ECO:0007669"/>
    <property type="project" value="TreeGrafter"/>
</dbReference>
<dbReference type="GO" id="GO:0004527">
    <property type="term" value="F:exonuclease activity"/>
    <property type="evidence" value="ECO:0007669"/>
    <property type="project" value="UniProtKB-UniRule"/>
</dbReference>
<dbReference type="GO" id="GO:0008270">
    <property type="term" value="F:zinc ion binding"/>
    <property type="evidence" value="ECO:0007669"/>
    <property type="project" value="UniProtKB-UniRule"/>
</dbReference>
<dbReference type="CDD" id="cd07717">
    <property type="entry name" value="RNaseZ_ZiPD-like_MBL-fold"/>
    <property type="match status" value="1"/>
</dbReference>
<dbReference type="FunFam" id="3.60.15.10:FF:000002">
    <property type="entry name" value="Ribonuclease Z"/>
    <property type="match status" value="1"/>
</dbReference>
<dbReference type="Gene3D" id="3.60.15.10">
    <property type="entry name" value="Ribonuclease Z/Hydroxyacylglutathione hydrolase-like"/>
    <property type="match status" value="1"/>
</dbReference>
<dbReference type="HAMAP" id="MF_01818">
    <property type="entry name" value="RNase_Z_BN"/>
    <property type="match status" value="1"/>
</dbReference>
<dbReference type="InterPro" id="IPR001279">
    <property type="entry name" value="Metallo-B-lactamas"/>
</dbReference>
<dbReference type="InterPro" id="IPR036866">
    <property type="entry name" value="RibonucZ/Hydroxyglut_hydro"/>
</dbReference>
<dbReference type="InterPro" id="IPR013469">
    <property type="entry name" value="Rnase_BN"/>
</dbReference>
<dbReference type="InterPro" id="IPR013471">
    <property type="entry name" value="RNase_Z/BN"/>
</dbReference>
<dbReference type="NCBIfam" id="NF000800">
    <property type="entry name" value="PRK00055.1-1"/>
    <property type="match status" value="1"/>
</dbReference>
<dbReference type="NCBIfam" id="NF000801">
    <property type="entry name" value="PRK00055.1-3"/>
    <property type="match status" value="1"/>
</dbReference>
<dbReference type="NCBIfam" id="TIGR02651">
    <property type="entry name" value="RNase_Z"/>
    <property type="match status" value="1"/>
</dbReference>
<dbReference type="NCBIfam" id="TIGR02649">
    <property type="entry name" value="true_RNase_BN"/>
    <property type="match status" value="1"/>
</dbReference>
<dbReference type="PANTHER" id="PTHR46018">
    <property type="entry name" value="ZINC PHOSPHODIESTERASE ELAC PROTEIN 1"/>
    <property type="match status" value="1"/>
</dbReference>
<dbReference type="PANTHER" id="PTHR46018:SF2">
    <property type="entry name" value="ZINC PHOSPHODIESTERASE ELAC PROTEIN 1"/>
    <property type="match status" value="1"/>
</dbReference>
<dbReference type="Pfam" id="PF12706">
    <property type="entry name" value="Lactamase_B_2"/>
    <property type="match status" value="2"/>
</dbReference>
<dbReference type="SUPFAM" id="SSF56281">
    <property type="entry name" value="Metallo-hydrolase/oxidoreductase"/>
    <property type="match status" value="1"/>
</dbReference>
<name>RBN_SALPK</name>
<feature type="chain" id="PRO_1000187986" description="Ribonuclease BN">
    <location>
        <begin position="1"/>
        <end position="305"/>
    </location>
</feature>
<feature type="active site" description="Proton acceptor" evidence="1">
    <location>
        <position position="68"/>
    </location>
</feature>
<feature type="binding site" evidence="1">
    <location>
        <position position="64"/>
    </location>
    <ligand>
        <name>Zn(2+)</name>
        <dbReference type="ChEBI" id="CHEBI:29105"/>
        <label>1</label>
        <note>catalytic</note>
    </ligand>
</feature>
<feature type="binding site" evidence="1">
    <location>
        <position position="66"/>
    </location>
    <ligand>
        <name>Zn(2+)</name>
        <dbReference type="ChEBI" id="CHEBI:29105"/>
        <label>1</label>
        <note>catalytic</note>
    </ligand>
</feature>
<feature type="binding site" evidence="1">
    <location>
        <position position="68"/>
    </location>
    <ligand>
        <name>Zn(2+)</name>
        <dbReference type="ChEBI" id="CHEBI:29105"/>
        <label>2</label>
        <note>catalytic</note>
    </ligand>
</feature>
<feature type="binding site" evidence="1">
    <location>
        <position position="69"/>
    </location>
    <ligand>
        <name>Zn(2+)</name>
        <dbReference type="ChEBI" id="CHEBI:29105"/>
        <label>2</label>
        <note>catalytic</note>
    </ligand>
</feature>
<feature type="binding site" evidence="1">
    <location>
        <position position="141"/>
    </location>
    <ligand>
        <name>Zn(2+)</name>
        <dbReference type="ChEBI" id="CHEBI:29105"/>
        <label>1</label>
        <note>catalytic</note>
    </ligand>
</feature>
<feature type="binding site" evidence="1">
    <location>
        <position position="212"/>
    </location>
    <ligand>
        <name>Zn(2+)</name>
        <dbReference type="ChEBI" id="CHEBI:29105"/>
        <label>1</label>
        <note>catalytic</note>
    </ligand>
</feature>
<feature type="binding site" evidence="1">
    <location>
        <position position="212"/>
    </location>
    <ligand>
        <name>Zn(2+)</name>
        <dbReference type="ChEBI" id="CHEBI:29105"/>
        <label>2</label>
        <note>catalytic</note>
    </ligand>
</feature>
<feature type="binding site" evidence="1">
    <location>
        <position position="270"/>
    </location>
    <ligand>
        <name>Zn(2+)</name>
        <dbReference type="ChEBI" id="CHEBI:29105"/>
        <label>2</label>
        <note>catalytic</note>
    </ligand>
</feature>